<name>MCFD2_HUMAN</name>
<keyword id="KW-0002">3D-structure</keyword>
<keyword id="KW-0025">Alternative splicing</keyword>
<keyword id="KW-0106">Calcium</keyword>
<keyword id="KW-0225">Disease variant</keyword>
<keyword id="KW-0256">Endoplasmic reticulum</keyword>
<keyword id="KW-0931">ER-Golgi transport</keyword>
<keyword id="KW-0333">Golgi apparatus</keyword>
<keyword id="KW-0479">Metal-binding</keyword>
<keyword id="KW-0597">Phosphoprotein</keyword>
<keyword id="KW-0653">Protein transport</keyword>
<keyword id="KW-1267">Proteomics identification</keyword>
<keyword id="KW-1185">Reference proteome</keyword>
<keyword id="KW-0677">Repeat</keyword>
<keyword id="KW-0732">Signal</keyword>
<keyword id="KW-0813">Transport</keyword>
<comment type="function">
    <text evidence="4">The MCFD2-LMAN1 complex forms a specific cargo receptor for the ER-to-Golgi transport of selected proteins. Plays a role in the secretion of coagulation factors.</text>
</comment>
<comment type="subunit">
    <text evidence="4 7 8">Interacts in a calcium-dependent manner with LMAN1.</text>
</comment>
<comment type="interaction">
    <interactant intactId="EBI-2689785">
        <id>Q8NI22</id>
    </interactant>
    <interactant intactId="EBI-6624398">
        <id>P06307</id>
        <label>CCK</label>
    </interactant>
    <organismsDiffer>false</organismsDiffer>
    <experiments>3</experiments>
</comment>
<comment type="interaction">
    <interactant intactId="EBI-2689785">
        <id>Q8NI22</id>
    </interactant>
    <interactant intactId="EBI-11522780">
        <id>Q96DZ9-2</id>
        <label>CMTM5</label>
    </interactant>
    <organismsDiffer>false</organismsDiffer>
    <experiments>3</experiments>
</comment>
<comment type="interaction">
    <interactant intactId="EBI-2689785">
        <id>Q8NI22</id>
    </interactant>
    <interactant intactId="EBI-12838366">
        <id>Q01638-2</id>
        <label>IL1RL1</label>
    </interactant>
    <organismsDiffer>false</organismsDiffer>
    <experiments>3</experiments>
</comment>
<comment type="interaction">
    <interactant intactId="EBI-2689785">
        <id>Q8NI22</id>
    </interactant>
    <interactant intactId="EBI-21591415">
        <id>P13473-2</id>
        <label>LAMP2</label>
    </interactant>
    <organismsDiffer>false</organismsDiffer>
    <experiments>3</experiments>
</comment>
<comment type="interaction">
    <interactant intactId="EBI-2689785">
        <id>Q8NI22</id>
    </interactant>
    <interactant intactId="EBI-1057738">
        <id>P49257</id>
        <label>LMAN1</label>
    </interactant>
    <organismsDiffer>false</organismsDiffer>
    <experiments>15</experiments>
</comment>
<comment type="interaction">
    <interactant intactId="EBI-2689785">
        <id>Q8NI22</id>
    </interactant>
    <interactant intactId="EBI-10235794">
        <id>Q15077</id>
        <label>P2RY6</label>
    </interactant>
    <organismsDiffer>false</organismsDiffer>
    <experiments>3</experiments>
</comment>
<comment type="interaction">
    <interactant intactId="EBI-2689785">
        <id>Q8NI22</id>
    </interactant>
    <interactant intactId="EBI-8652812">
        <id>P54315</id>
        <label>PNLIPRP1</label>
    </interactant>
    <organismsDiffer>false</organismsDiffer>
    <experiments>3</experiments>
</comment>
<comment type="interaction">
    <interactant intactId="EBI-2689785">
        <id>Q8NI22</id>
    </interactant>
    <interactant intactId="EBI-2684237">
        <id>O00767</id>
        <label>SCD</label>
    </interactant>
    <organismsDiffer>false</organismsDiffer>
    <experiments>3</experiments>
</comment>
<comment type="interaction">
    <interactant intactId="EBI-2689785">
        <id>Q8NI22</id>
    </interactant>
    <interactant intactId="EBI-2623095">
        <id>Q9Y371</id>
        <label>SH3GLB1</label>
    </interactant>
    <organismsDiffer>false</organismsDiffer>
    <experiments>3</experiments>
</comment>
<comment type="interaction">
    <interactant intactId="EBI-2689785">
        <id>Q8NI22</id>
    </interactant>
    <interactant intactId="EBI-12870360">
        <id>P78382</id>
        <label>SLC35A1</label>
    </interactant>
    <organismsDiffer>false</organismsDiffer>
    <experiments>3</experiments>
</comment>
<comment type="interaction">
    <interactant intactId="EBI-2689785">
        <id>Q8NI22</id>
    </interactant>
    <interactant intactId="EBI-13075176">
        <id>Q8N2H4</id>
        <label>SYS1</label>
    </interactant>
    <organismsDiffer>false</organismsDiffer>
    <experiments>3</experiments>
</comment>
<comment type="interaction">
    <interactant intactId="EBI-2689785">
        <id>Q8NI22</id>
    </interactant>
    <interactant intactId="EBI-25399342">
        <id>Q9TU32</id>
        <label>LMAN1</label>
    </interactant>
    <organismsDiffer>true</organismsDiffer>
    <experiments>2</experiments>
</comment>
<comment type="subcellular location">
    <subcellularLocation>
        <location evidence="4">Endoplasmic reticulum-Golgi intermediate compartment</location>
    </subcellularLocation>
    <subcellularLocation>
        <location evidence="4">Endoplasmic reticulum</location>
    </subcellularLocation>
    <subcellularLocation>
        <location evidence="4">Golgi apparatus</location>
    </subcellularLocation>
</comment>
<comment type="alternative products">
    <event type="alternative splicing"/>
    <isoform>
        <id>Q8NI22-1</id>
        <name>1</name>
        <sequence type="displayed"/>
    </isoform>
    <isoform>
        <id>Q8NI22-2</id>
        <name>2</name>
        <sequence type="described" ref="VSP_043815"/>
    </isoform>
    <isoform>
        <id>Q8NI22-3</id>
        <name>3</name>
        <sequence type="described" ref="VSP_043814"/>
    </isoform>
</comment>
<comment type="domain">
    <text evidence="5">Essentially unstructured in the absence of calcium ions. Requires calcium ions for folding.</text>
</comment>
<comment type="disease" evidence="4 5 6 9">
    <disease id="DI-02942">
        <name>Factor V and factor VIII combined deficiency 2</name>
        <acronym>F5F8D2</acronym>
        <description>A blood coagulation disorder characterized by bleeding symptoms similar to those in hemophilia or parahemophilia, that are caused by single deficiency of FV or FVIII, respectively. The most common symptoms are epistaxis, menorrhagia, and excessive bleeding during or after trauma. Plasma levels of coagulation factors V and VIII are in the range of 5 to 30% of normal.</description>
        <dbReference type="MIM" id="613625"/>
    </disease>
    <text>The disease is caused by variants affecting the gene represented in this entry.</text>
</comment>
<comment type="sequence caution" evidence="12">
    <conflict type="erroneous initiation">
        <sequence resource="EMBL-CDS" id="CAD38756"/>
    </conflict>
</comment>
<gene>
    <name type="primary">MCFD2</name>
    <name type="synonym">SDNSF</name>
</gene>
<proteinExistence type="evidence at protein level"/>
<accession>Q8NI22</accession>
<accession>A8K7W2</accession>
<accession>D6W5A9</accession>
<accession>E9PD95</accession>
<accession>Q53SS3</accession>
<accession>Q68D61</accession>
<accession>Q8N3M5</accession>
<evidence type="ECO:0000250" key="1">
    <source>
        <dbReference type="UniProtKB" id="Q8K5B3"/>
    </source>
</evidence>
<evidence type="ECO:0000255" key="2"/>
<evidence type="ECO:0000255" key="3">
    <source>
        <dbReference type="PROSITE-ProRule" id="PRU00448"/>
    </source>
</evidence>
<evidence type="ECO:0000269" key="4">
    <source>
    </source>
</evidence>
<evidence type="ECO:0000269" key="5">
    <source>
    </source>
</evidence>
<evidence type="ECO:0000269" key="6">
    <source>
    </source>
</evidence>
<evidence type="ECO:0000269" key="7">
    <source>
    </source>
</evidence>
<evidence type="ECO:0000269" key="8">
    <source>
    </source>
</evidence>
<evidence type="ECO:0000269" key="9">
    <source>
    </source>
</evidence>
<evidence type="ECO:0000303" key="10">
    <source>
    </source>
</evidence>
<evidence type="ECO:0000303" key="11">
    <source>
    </source>
</evidence>
<evidence type="ECO:0000305" key="12"/>
<evidence type="ECO:0007829" key="13">
    <source>
        <dbReference type="PDB" id="2VRG"/>
    </source>
</evidence>
<evidence type="ECO:0007829" key="14">
    <source>
        <dbReference type="PDB" id="4YGB"/>
    </source>
</evidence>
<evidence type="ECO:0007829" key="15">
    <source>
        <dbReference type="PDB" id="8JP4"/>
    </source>
</evidence>
<evidence type="ECO:0007829" key="16">
    <source>
        <dbReference type="PDB" id="8JP5"/>
    </source>
</evidence>
<protein>
    <recommendedName>
        <fullName>Multiple coagulation factor deficiency protein 2</fullName>
    </recommendedName>
    <alternativeName>
        <fullName>Neural stem cell-derived neuronal survival protein</fullName>
    </alternativeName>
</protein>
<reference key="1">
    <citation type="submission" date="2002-01" db="EMBL/GenBank/DDBJ databases">
        <title>Isolation and characterization of SDNSF, a novel secretory molecule with neuronal survival effect, from adult rat hippocampal stem cells.</title>
        <authorList>
            <person name="Toda H."/>
            <person name="Tashiro K."/>
            <person name="Takahashi J."/>
            <person name="Hashimoto N."/>
            <person name="Nakano I."/>
            <person name="Kobuke K."/>
            <person name="Tsuji M."/>
            <person name="Honjo T."/>
        </authorList>
    </citation>
    <scope>NUCLEOTIDE SEQUENCE [MRNA] (ISOFORM 1)</scope>
    <source>
        <tissue>Heart</tissue>
    </source>
</reference>
<reference key="2">
    <citation type="journal article" date="2003" name="Nat. Genet.">
        <title>Bleeding due to disruption of a cargo-specific ER-to-Golgi transport complex.</title>
        <authorList>
            <person name="Zhang B."/>
            <person name="Cunningham M.A."/>
            <person name="Nichols W.C."/>
            <person name="Bernat J.A."/>
            <person name="Seligsohn U."/>
            <person name="Pipe S.W."/>
            <person name="McVey J.H."/>
            <person name="Schulte-Overberg U."/>
            <person name="de Bosch N.B."/>
            <person name="Ruiz-Saez A."/>
            <person name="White G.C."/>
            <person name="Tuddenham E.G."/>
            <person name="Kaufman R.J."/>
            <person name="Ginsburg D."/>
        </authorList>
    </citation>
    <scope>NUCLEOTIDE SEQUENCE [MRNA] (ISOFORM 1)</scope>
    <scope>SUBCELLULAR LOCATION</scope>
    <scope>INTERACTION WITH LMAN1</scope>
    <scope>FUNCTION</scope>
    <scope>VARIANTS F5F8D2 GLU-129 AND THR-136</scope>
</reference>
<reference key="3">
    <citation type="journal article" date="2004" name="Nat. Genet.">
        <title>Complete sequencing and characterization of 21,243 full-length human cDNAs.</title>
        <authorList>
            <person name="Ota T."/>
            <person name="Suzuki Y."/>
            <person name="Nishikawa T."/>
            <person name="Otsuki T."/>
            <person name="Sugiyama T."/>
            <person name="Irie R."/>
            <person name="Wakamatsu A."/>
            <person name="Hayashi K."/>
            <person name="Sato H."/>
            <person name="Nagai K."/>
            <person name="Kimura K."/>
            <person name="Makita H."/>
            <person name="Sekine M."/>
            <person name="Obayashi M."/>
            <person name="Nishi T."/>
            <person name="Shibahara T."/>
            <person name="Tanaka T."/>
            <person name="Ishii S."/>
            <person name="Yamamoto J."/>
            <person name="Saito K."/>
            <person name="Kawai Y."/>
            <person name="Isono Y."/>
            <person name="Nakamura Y."/>
            <person name="Nagahari K."/>
            <person name="Murakami K."/>
            <person name="Yasuda T."/>
            <person name="Iwayanagi T."/>
            <person name="Wagatsuma M."/>
            <person name="Shiratori A."/>
            <person name="Sudo H."/>
            <person name="Hosoiri T."/>
            <person name="Kaku Y."/>
            <person name="Kodaira H."/>
            <person name="Kondo H."/>
            <person name="Sugawara M."/>
            <person name="Takahashi M."/>
            <person name="Kanda K."/>
            <person name="Yokoi T."/>
            <person name="Furuya T."/>
            <person name="Kikkawa E."/>
            <person name="Omura Y."/>
            <person name="Abe K."/>
            <person name="Kamihara K."/>
            <person name="Katsuta N."/>
            <person name="Sato K."/>
            <person name="Tanikawa M."/>
            <person name="Yamazaki M."/>
            <person name="Ninomiya K."/>
            <person name="Ishibashi T."/>
            <person name="Yamashita H."/>
            <person name="Murakawa K."/>
            <person name="Fujimori K."/>
            <person name="Tanai H."/>
            <person name="Kimata M."/>
            <person name="Watanabe M."/>
            <person name="Hiraoka S."/>
            <person name="Chiba Y."/>
            <person name="Ishida S."/>
            <person name="Ono Y."/>
            <person name="Takiguchi S."/>
            <person name="Watanabe S."/>
            <person name="Yosida M."/>
            <person name="Hotuta T."/>
            <person name="Kusano J."/>
            <person name="Kanehori K."/>
            <person name="Takahashi-Fujii A."/>
            <person name="Hara H."/>
            <person name="Tanase T.-O."/>
            <person name="Nomura Y."/>
            <person name="Togiya S."/>
            <person name="Komai F."/>
            <person name="Hara R."/>
            <person name="Takeuchi K."/>
            <person name="Arita M."/>
            <person name="Imose N."/>
            <person name="Musashino K."/>
            <person name="Yuuki H."/>
            <person name="Oshima A."/>
            <person name="Sasaki N."/>
            <person name="Aotsuka S."/>
            <person name="Yoshikawa Y."/>
            <person name="Matsunawa H."/>
            <person name="Ichihara T."/>
            <person name="Shiohata N."/>
            <person name="Sano S."/>
            <person name="Moriya S."/>
            <person name="Momiyama H."/>
            <person name="Satoh N."/>
            <person name="Takami S."/>
            <person name="Terashima Y."/>
            <person name="Suzuki O."/>
            <person name="Nakagawa S."/>
            <person name="Senoh A."/>
            <person name="Mizoguchi H."/>
            <person name="Goto Y."/>
            <person name="Shimizu F."/>
            <person name="Wakebe H."/>
            <person name="Hishigaki H."/>
            <person name="Watanabe T."/>
            <person name="Sugiyama A."/>
            <person name="Takemoto M."/>
            <person name="Kawakami B."/>
            <person name="Yamazaki M."/>
            <person name="Watanabe K."/>
            <person name="Kumagai A."/>
            <person name="Itakura S."/>
            <person name="Fukuzumi Y."/>
            <person name="Fujimori Y."/>
            <person name="Komiyama M."/>
            <person name="Tashiro H."/>
            <person name="Tanigami A."/>
            <person name="Fujiwara T."/>
            <person name="Ono T."/>
            <person name="Yamada K."/>
            <person name="Fujii Y."/>
            <person name="Ozaki K."/>
            <person name="Hirao M."/>
            <person name="Ohmori Y."/>
            <person name="Kawabata A."/>
            <person name="Hikiji T."/>
            <person name="Kobatake N."/>
            <person name="Inagaki H."/>
            <person name="Ikema Y."/>
            <person name="Okamoto S."/>
            <person name="Okitani R."/>
            <person name="Kawakami T."/>
            <person name="Noguchi S."/>
            <person name="Itoh T."/>
            <person name="Shigeta K."/>
            <person name="Senba T."/>
            <person name="Matsumura K."/>
            <person name="Nakajima Y."/>
            <person name="Mizuno T."/>
            <person name="Morinaga M."/>
            <person name="Sasaki M."/>
            <person name="Togashi T."/>
            <person name="Oyama M."/>
            <person name="Hata H."/>
            <person name="Watanabe M."/>
            <person name="Komatsu T."/>
            <person name="Mizushima-Sugano J."/>
            <person name="Satoh T."/>
            <person name="Shirai Y."/>
            <person name="Takahashi Y."/>
            <person name="Nakagawa K."/>
            <person name="Okumura K."/>
            <person name="Nagase T."/>
            <person name="Nomura N."/>
            <person name="Kikuchi H."/>
            <person name="Masuho Y."/>
            <person name="Yamashita R."/>
            <person name="Nakai K."/>
            <person name="Yada T."/>
            <person name="Nakamura Y."/>
            <person name="Ohara O."/>
            <person name="Isogai T."/>
            <person name="Sugano S."/>
        </authorList>
    </citation>
    <scope>NUCLEOTIDE SEQUENCE [LARGE SCALE MRNA] (ISOFORM 1)</scope>
    <source>
        <tissue>Synovium</tissue>
    </source>
</reference>
<reference key="4">
    <citation type="journal article" date="2007" name="BMC Genomics">
        <title>The full-ORF clone resource of the German cDNA consortium.</title>
        <authorList>
            <person name="Bechtel S."/>
            <person name="Rosenfelder H."/>
            <person name="Duda A."/>
            <person name="Schmidt C.P."/>
            <person name="Ernst U."/>
            <person name="Wellenreuther R."/>
            <person name="Mehrle A."/>
            <person name="Schuster C."/>
            <person name="Bahr A."/>
            <person name="Bloecker H."/>
            <person name="Heubner D."/>
            <person name="Hoerlein A."/>
            <person name="Michel G."/>
            <person name="Wedler H."/>
            <person name="Koehrer K."/>
            <person name="Ottenwaelder B."/>
            <person name="Poustka A."/>
            <person name="Wiemann S."/>
            <person name="Schupp I."/>
        </authorList>
    </citation>
    <scope>NUCLEOTIDE SEQUENCE [LARGE SCALE MRNA] (ISOFORMS 1 AND 2)</scope>
    <source>
        <tissue>Melanoma</tissue>
    </source>
</reference>
<reference key="5">
    <citation type="journal article" date="2005" name="Nature">
        <title>Generation and annotation of the DNA sequences of human chromosomes 2 and 4.</title>
        <authorList>
            <person name="Hillier L.W."/>
            <person name="Graves T.A."/>
            <person name="Fulton R.S."/>
            <person name="Fulton L.A."/>
            <person name="Pepin K.H."/>
            <person name="Minx P."/>
            <person name="Wagner-McPherson C."/>
            <person name="Layman D."/>
            <person name="Wylie K."/>
            <person name="Sekhon M."/>
            <person name="Becker M.C."/>
            <person name="Fewell G.A."/>
            <person name="Delehaunty K.D."/>
            <person name="Miner T.L."/>
            <person name="Nash W.E."/>
            <person name="Kremitzki C."/>
            <person name="Oddy L."/>
            <person name="Du H."/>
            <person name="Sun H."/>
            <person name="Bradshaw-Cordum H."/>
            <person name="Ali J."/>
            <person name="Carter J."/>
            <person name="Cordes M."/>
            <person name="Harris A."/>
            <person name="Isak A."/>
            <person name="van Brunt A."/>
            <person name="Nguyen C."/>
            <person name="Du F."/>
            <person name="Courtney L."/>
            <person name="Kalicki J."/>
            <person name="Ozersky P."/>
            <person name="Abbott S."/>
            <person name="Armstrong J."/>
            <person name="Belter E.A."/>
            <person name="Caruso L."/>
            <person name="Cedroni M."/>
            <person name="Cotton M."/>
            <person name="Davidson T."/>
            <person name="Desai A."/>
            <person name="Elliott G."/>
            <person name="Erb T."/>
            <person name="Fronick C."/>
            <person name="Gaige T."/>
            <person name="Haakenson W."/>
            <person name="Haglund K."/>
            <person name="Holmes A."/>
            <person name="Harkins R."/>
            <person name="Kim K."/>
            <person name="Kruchowski S.S."/>
            <person name="Strong C.M."/>
            <person name="Grewal N."/>
            <person name="Goyea E."/>
            <person name="Hou S."/>
            <person name="Levy A."/>
            <person name="Martinka S."/>
            <person name="Mead K."/>
            <person name="McLellan M.D."/>
            <person name="Meyer R."/>
            <person name="Randall-Maher J."/>
            <person name="Tomlinson C."/>
            <person name="Dauphin-Kohlberg S."/>
            <person name="Kozlowicz-Reilly A."/>
            <person name="Shah N."/>
            <person name="Swearengen-Shahid S."/>
            <person name="Snider J."/>
            <person name="Strong J.T."/>
            <person name="Thompson J."/>
            <person name="Yoakum M."/>
            <person name="Leonard S."/>
            <person name="Pearman C."/>
            <person name="Trani L."/>
            <person name="Radionenko M."/>
            <person name="Waligorski J.E."/>
            <person name="Wang C."/>
            <person name="Rock S.M."/>
            <person name="Tin-Wollam A.-M."/>
            <person name="Maupin R."/>
            <person name="Latreille P."/>
            <person name="Wendl M.C."/>
            <person name="Yang S.-P."/>
            <person name="Pohl C."/>
            <person name="Wallis J.W."/>
            <person name="Spieth J."/>
            <person name="Bieri T.A."/>
            <person name="Berkowicz N."/>
            <person name="Nelson J.O."/>
            <person name="Osborne J."/>
            <person name="Ding L."/>
            <person name="Meyer R."/>
            <person name="Sabo A."/>
            <person name="Shotland Y."/>
            <person name="Sinha P."/>
            <person name="Wohldmann P.E."/>
            <person name="Cook L.L."/>
            <person name="Hickenbotham M.T."/>
            <person name="Eldred J."/>
            <person name="Williams D."/>
            <person name="Jones T.A."/>
            <person name="She X."/>
            <person name="Ciccarelli F.D."/>
            <person name="Izaurralde E."/>
            <person name="Taylor J."/>
            <person name="Schmutz J."/>
            <person name="Myers R.M."/>
            <person name="Cox D.R."/>
            <person name="Huang X."/>
            <person name="McPherson J.D."/>
            <person name="Mardis E.R."/>
            <person name="Clifton S.W."/>
            <person name="Warren W.C."/>
            <person name="Chinwalla A.T."/>
            <person name="Eddy S.R."/>
            <person name="Marra M.A."/>
            <person name="Ovcharenko I."/>
            <person name="Furey T.S."/>
            <person name="Miller W."/>
            <person name="Eichler E.E."/>
            <person name="Bork P."/>
            <person name="Suyama M."/>
            <person name="Torrents D."/>
            <person name="Waterston R.H."/>
            <person name="Wilson R.K."/>
        </authorList>
    </citation>
    <scope>NUCLEOTIDE SEQUENCE [LARGE SCALE GENOMIC DNA]</scope>
</reference>
<reference key="6">
    <citation type="submission" date="2005-09" db="EMBL/GenBank/DDBJ databases">
        <authorList>
            <person name="Mural R.J."/>
            <person name="Istrail S."/>
            <person name="Sutton G.G."/>
            <person name="Florea L."/>
            <person name="Halpern A.L."/>
            <person name="Mobarry C.M."/>
            <person name="Lippert R."/>
            <person name="Walenz B."/>
            <person name="Shatkay H."/>
            <person name="Dew I."/>
            <person name="Miller J.R."/>
            <person name="Flanigan M.J."/>
            <person name="Edwards N.J."/>
            <person name="Bolanos R."/>
            <person name="Fasulo D."/>
            <person name="Halldorsson B.V."/>
            <person name="Hannenhalli S."/>
            <person name="Turner R."/>
            <person name="Yooseph S."/>
            <person name="Lu F."/>
            <person name="Nusskern D.R."/>
            <person name="Shue B.C."/>
            <person name="Zheng X.H."/>
            <person name="Zhong F."/>
            <person name="Delcher A.L."/>
            <person name="Huson D.H."/>
            <person name="Kravitz S.A."/>
            <person name="Mouchard L."/>
            <person name="Reinert K."/>
            <person name="Remington K.A."/>
            <person name="Clark A.G."/>
            <person name="Waterman M.S."/>
            <person name="Eichler E.E."/>
            <person name="Adams M.D."/>
            <person name="Hunkapiller M.W."/>
            <person name="Myers E.W."/>
            <person name="Venter J.C."/>
        </authorList>
    </citation>
    <scope>NUCLEOTIDE SEQUENCE [LARGE SCALE GENOMIC DNA]</scope>
</reference>
<reference key="7">
    <citation type="journal article" date="2004" name="Genome Res.">
        <title>The status, quality, and expansion of the NIH full-length cDNA project: the Mammalian Gene Collection (MGC).</title>
        <authorList>
            <consortium name="The MGC Project Team"/>
        </authorList>
    </citation>
    <scope>NUCLEOTIDE SEQUENCE [LARGE SCALE MRNA] (ISOFORMS 1 AND 2)</scope>
    <source>
        <tissue>Brain</tissue>
        <tissue>Skin</tissue>
    </source>
</reference>
<reference key="8">
    <citation type="journal article" date="2011" name="BMC Syst. Biol.">
        <title>Initial characterization of the human central proteome.</title>
        <authorList>
            <person name="Burkard T.R."/>
            <person name="Planyavsky M."/>
            <person name="Kaupe I."/>
            <person name="Breitwieser F.P."/>
            <person name="Buerckstuemmer T."/>
            <person name="Bennett K.L."/>
            <person name="Superti-Furga G."/>
            <person name="Colinge J."/>
        </authorList>
    </citation>
    <scope>IDENTIFICATION BY MASS SPECTROMETRY [LARGE SCALE ANALYSIS]</scope>
</reference>
<reference key="9">
    <citation type="journal article" date="2014" name="J. Proteomics">
        <title>An enzyme assisted RP-RPLC approach for in-depth analysis of human liver phosphoproteome.</title>
        <authorList>
            <person name="Bian Y."/>
            <person name="Song C."/>
            <person name="Cheng K."/>
            <person name="Dong M."/>
            <person name="Wang F."/>
            <person name="Huang J."/>
            <person name="Sun D."/>
            <person name="Wang L."/>
            <person name="Ye M."/>
            <person name="Zou H."/>
        </authorList>
    </citation>
    <scope>IDENTIFICATION BY MASS SPECTROMETRY [LARGE SCALE ANALYSIS]</scope>
    <source>
        <tissue>Liver</tissue>
    </source>
</reference>
<reference key="10">
    <citation type="journal article" date="2015" name="Proteomics">
        <title>N-terminome analysis of the human mitochondrial proteome.</title>
        <authorList>
            <person name="Vaca Jacome A.S."/>
            <person name="Rabilloud T."/>
            <person name="Schaeffer-Reiss C."/>
            <person name="Rompais M."/>
            <person name="Ayoub D."/>
            <person name="Lane L."/>
            <person name="Bairoch A."/>
            <person name="Van Dorsselaer A."/>
            <person name="Carapito C."/>
        </authorList>
    </citation>
    <scope>IDENTIFICATION BY MASS SPECTROMETRY [LARGE SCALE ANALYSIS]</scope>
</reference>
<reference key="11">
    <citation type="journal article" date="2008" name="J. Mol. Biol.">
        <title>New insights into multiple coagulation factor deficiency from the solution structure of human MCFD2.</title>
        <authorList>
            <person name="Guy J.E."/>
            <person name="Wigren E."/>
            <person name="Svaerd M."/>
            <person name="Haerd T."/>
            <person name="Lindqvist Y."/>
        </authorList>
    </citation>
    <scope>STRUCTURE BY NMR OF 27-146</scope>
    <scope>DOMAIN</scope>
    <scope>CHARACTERIZATION OF VARIANTS F5F8D2 GLU-129 AND THR-136</scope>
    <scope>CALCIUM-BINDING</scope>
</reference>
<reference key="12">
    <citation type="journal article" date="2010" name="FEBS Lett.">
        <title>Crystal structure of the LMAN1-CRD/MCFD2 transport receptor complex provides insight into combined deficiency of factor V and factor VIII.</title>
        <authorList>
            <person name="Wigren E."/>
            <person name="Bourhis J.M."/>
            <person name="Kursula I."/>
            <person name="Guy J.E."/>
            <person name="Lindqvist Y."/>
        </authorList>
    </citation>
    <scope>X-RAY CRYSTALLOGRAPHY (2.45 ANGSTROMS) OF 58-146 IN COMPLEX WITH LMAN1</scope>
    <scope>SUBUNIT</scope>
</reference>
<reference key="13">
    <citation type="journal article" date="2010" name="Proc. Natl. Acad. Sci. U.S.A.">
        <title>Structural basis for the cooperative interplay between the two causative gene products of combined factor V and factor VIII deficiency.</title>
        <authorList>
            <person name="Nishio M."/>
            <person name="Kamiya Y."/>
            <person name="Mizushima T."/>
            <person name="Wakatsuki S."/>
            <person name="Sasakawa H."/>
            <person name="Yamamoto K."/>
            <person name="Uchiyama S."/>
            <person name="Noda M."/>
            <person name="McKay A.R."/>
            <person name="Fukui K."/>
            <person name="Hauri H.P."/>
            <person name="Kato K."/>
        </authorList>
    </citation>
    <scope>X-RAY CRYSTALLOGRAPHY (1.84 ANGSTROMS) OF 27-146 IN COMPLEX WITH LMAN1</scope>
    <scope>SUBUNIT</scope>
    <scope>CALCIUM-BINDING SITES</scope>
</reference>
<reference key="14">
    <citation type="journal article" date="2008" name="Blood Coagul. Fibrinolysis">
        <title>The first case of combined coagulation factor V and coagulation factor VIII deficiency in Poland due to a novel p.Tyr135Asn missense mutation in the MCFD2 gene.</title>
        <authorList>
            <person name="Ivaskevicius V."/>
            <person name="Windyga J."/>
            <person name="Baran B."/>
            <person name="Bykowska K."/>
            <person name="Daugela L."/>
            <person name="Watzka M."/>
            <person name="Seifried E."/>
            <person name="Oldenburg J."/>
        </authorList>
    </citation>
    <scope>VARIANT F5F8D2 ASN-135</scope>
</reference>
<reference key="15">
    <citation type="journal article" date="2010" name="Haemophilia">
        <title>Molecular analysis in two Tunisian families with combined factor V and factor VIII deficiency.</title>
        <authorList>
            <person name="Abdallah H.E."/>
            <person name="Gouider E."/>
            <person name="Amor M.B."/>
            <person name="Jlizi A."/>
            <person name="Meddeb B."/>
            <person name="Elgaaied A."/>
        </authorList>
    </citation>
    <scope>VARIANT F5F8D2 HIS-81</scope>
</reference>
<dbReference type="EMBL" id="AF475284">
    <property type="protein sequence ID" value="AAM28465.1"/>
    <property type="molecule type" value="mRNA"/>
</dbReference>
<dbReference type="EMBL" id="AF537214">
    <property type="protein sequence ID" value="AAP23162.1"/>
    <property type="molecule type" value="mRNA"/>
</dbReference>
<dbReference type="EMBL" id="AK292127">
    <property type="protein sequence ID" value="BAF84816.1"/>
    <property type="molecule type" value="mRNA"/>
</dbReference>
<dbReference type="EMBL" id="AL833900">
    <property type="protein sequence ID" value="CAD38756.1"/>
    <property type="status" value="ALT_INIT"/>
    <property type="molecule type" value="mRNA"/>
</dbReference>
<dbReference type="EMBL" id="CR749562">
    <property type="protein sequence ID" value="CAH18359.1"/>
    <property type="molecule type" value="mRNA"/>
</dbReference>
<dbReference type="EMBL" id="AC016722">
    <property type="protein sequence ID" value="AAY15013.1"/>
    <property type="molecule type" value="Genomic_DNA"/>
</dbReference>
<dbReference type="EMBL" id="AC093732">
    <property type="status" value="NOT_ANNOTATED_CDS"/>
    <property type="molecule type" value="Genomic_DNA"/>
</dbReference>
<dbReference type="EMBL" id="CH471053">
    <property type="protein sequence ID" value="EAX00230.1"/>
    <property type="molecule type" value="Genomic_DNA"/>
</dbReference>
<dbReference type="EMBL" id="CH471053">
    <property type="protein sequence ID" value="EAX00231.1"/>
    <property type="molecule type" value="Genomic_DNA"/>
</dbReference>
<dbReference type="EMBL" id="CH471053">
    <property type="protein sequence ID" value="EAX00232.1"/>
    <property type="molecule type" value="Genomic_DNA"/>
</dbReference>
<dbReference type="EMBL" id="CH471053">
    <property type="protein sequence ID" value="EAX00233.1"/>
    <property type="molecule type" value="Genomic_DNA"/>
</dbReference>
<dbReference type="EMBL" id="BC037845">
    <property type="protein sequence ID" value="AAH37845.1"/>
    <property type="molecule type" value="mRNA"/>
</dbReference>
<dbReference type="EMBL" id="BC040357">
    <property type="protein sequence ID" value="AAH40357.1"/>
    <property type="molecule type" value="mRNA"/>
</dbReference>
<dbReference type="CCDS" id="CCDS33192.1">
    <molecule id="Q8NI22-1"/>
</dbReference>
<dbReference type="CCDS" id="CCDS54354.1">
    <molecule id="Q8NI22-2"/>
</dbReference>
<dbReference type="CCDS" id="CCDS54355.1">
    <molecule id="Q8NI22-3"/>
</dbReference>
<dbReference type="PIR" id="JS0027">
    <property type="entry name" value="JS0027"/>
</dbReference>
<dbReference type="RefSeq" id="NP_001164977.1">
    <molecule id="Q8NI22-1"/>
    <property type="nucleotide sequence ID" value="NM_001171506.2"/>
</dbReference>
<dbReference type="RefSeq" id="NP_001164978.1">
    <molecule id="Q8NI22-1"/>
    <property type="nucleotide sequence ID" value="NM_001171507.2"/>
</dbReference>
<dbReference type="RefSeq" id="NP_001164979.1">
    <molecule id="Q8NI22-1"/>
    <property type="nucleotide sequence ID" value="NM_001171508.2"/>
</dbReference>
<dbReference type="RefSeq" id="NP_001164980.1">
    <molecule id="Q8NI22-2"/>
    <property type="nucleotide sequence ID" value="NM_001171509.3"/>
</dbReference>
<dbReference type="RefSeq" id="NP_001164981.1">
    <molecule id="Q8NI22-2"/>
    <property type="nucleotide sequence ID" value="NM_001171510.3"/>
</dbReference>
<dbReference type="RefSeq" id="NP_001164982.1">
    <molecule id="Q8NI22-3"/>
    <property type="nucleotide sequence ID" value="NM_001171511.3"/>
</dbReference>
<dbReference type="RefSeq" id="NP_644808.1">
    <molecule id="Q8NI22-1"/>
    <property type="nucleotide sequence ID" value="NM_139279.6"/>
</dbReference>
<dbReference type="PDB" id="2VRG">
    <property type="method" value="NMR"/>
    <property type="chains" value="A=27-146"/>
</dbReference>
<dbReference type="PDB" id="3A4U">
    <property type="method" value="X-ray"/>
    <property type="resolution" value="1.84 A"/>
    <property type="chains" value="B=27-146"/>
</dbReference>
<dbReference type="PDB" id="3LCP">
    <property type="method" value="X-ray"/>
    <property type="resolution" value="2.45 A"/>
    <property type="chains" value="C/D=58-146"/>
</dbReference>
<dbReference type="PDB" id="3WHT">
    <property type="method" value="X-ray"/>
    <property type="resolution" value="1.80 A"/>
    <property type="chains" value="B=67-146"/>
</dbReference>
<dbReference type="PDB" id="3WHU">
    <property type="method" value="X-ray"/>
    <property type="resolution" value="2.60 A"/>
    <property type="chains" value="B=67-146"/>
</dbReference>
<dbReference type="PDB" id="3WNX">
    <property type="method" value="X-ray"/>
    <property type="resolution" value="2.75 A"/>
    <property type="chains" value="B=67-146"/>
</dbReference>
<dbReference type="PDB" id="4YGB">
    <property type="method" value="X-ray"/>
    <property type="resolution" value="1.60 A"/>
    <property type="chains" value="B/D=67-146"/>
</dbReference>
<dbReference type="PDB" id="4YGC">
    <property type="method" value="X-ray"/>
    <property type="resolution" value="2.40 A"/>
    <property type="chains" value="B/D/F/H=67-146"/>
</dbReference>
<dbReference type="PDB" id="4YGD">
    <property type="method" value="X-ray"/>
    <property type="resolution" value="2.51 A"/>
    <property type="chains" value="B/D/F/H=67-146"/>
</dbReference>
<dbReference type="PDB" id="4YGE">
    <property type="method" value="X-ray"/>
    <property type="resolution" value="3.05 A"/>
    <property type="chains" value="B/D/F=27-146"/>
</dbReference>
<dbReference type="PDB" id="8JP4">
    <property type="method" value="EM"/>
    <property type="resolution" value="2.53 A"/>
    <property type="chains" value="C/D/G/H=27-146"/>
</dbReference>
<dbReference type="PDB" id="8JP5">
    <property type="method" value="EM"/>
    <property type="resolution" value="2.59 A"/>
    <property type="chains" value="C/D/G/H=27-146"/>
</dbReference>
<dbReference type="PDB" id="8JP6">
    <property type="method" value="EM"/>
    <property type="resolution" value="3.29 A"/>
    <property type="chains" value="C/D/G/H=27-146"/>
</dbReference>
<dbReference type="PDB" id="8JP7">
    <property type="method" value="EM"/>
    <property type="resolution" value="3.51 A"/>
    <property type="chains" value="C/D/G/H=27-146"/>
</dbReference>
<dbReference type="PDB" id="8JP8">
    <property type="method" value="EM"/>
    <property type="resolution" value="3.39 A"/>
    <property type="chains" value="C/D/G/H=27-146"/>
</dbReference>
<dbReference type="PDB" id="8JP9">
    <property type="method" value="EM"/>
    <property type="resolution" value="3.37 A"/>
    <property type="chains" value="C/D/G/H=27-146"/>
</dbReference>
<dbReference type="PDB" id="8JPG">
    <property type="method" value="EM"/>
    <property type="resolution" value="6.76 A"/>
    <property type="chains" value="C/D/G/H=27-146"/>
</dbReference>
<dbReference type="PDBsum" id="2VRG"/>
<dbReference type="PDBsum" id="3A4U"/>
<dbReference type="PDBsum" id="3LCP"/>
<dbReference type="PDBsum" id="3WHT"/>
<dbReference type="PDBsum" id="3WHU"/>
<dbReference type="PDBsum" id="3WNX"/>
<dbReference type="PDBsum" id="4YGB"/>
<dbReference type="PDBsum" id="4YGC"/>
<dbReference type="PDBsum" id="4YGD"/>
<dbReference type="PDBsum" id="4YGE"/>
<dbReference type="PDBsum" id="8JP4"/>
<dbReference type="PDBsum" id="8JP5"/>
<dbReference type="PDBsum" id="8JP6"/>
<dbReference type="PDBsum" id="8JP7"/>
<dbReference type="PDBsum" id="8JP8"/>
<dbReference type="PDBsum" id="8JP9"/>
<dbReference type="PDBsum" id="8JPG"/>
<dbReference type="BMRB" id="Q8NI22"/>
<dbReference type="EMDB" id="EMD-36467"/>
<dbReference type="EMDB" id="EMD-36468"/>
<dbReference type="EMDB" id="EMD-36469"/>
<dbReference type="EMDB" id="EMD-36470"/>
<dbReference type="EMDB" id="EMD-36471"/>
<dbReference type="EMDB" id="EMD-36472"/>
<dbReference type="EMDB" id="EMD-36479"/>
<dbReference type="SMR" id="Q8NI22"/>
<dbReference type="BioGRID" id="124712">
    <property type="interactions" value="83"/>
</dbReference>
<dbReference type="ComplexPortal" id="CPX-8001">
    <property type="entry name" value="LMAN1-MCFD2 cargo receptor complex"/>
</dbReference>
<dbReference type="CORUM" id="Q8NI22"/>
<dbReference type="DIP" id="DIP-56233N"/>
<dbReference type="FunCoup" id="Q8NI22">
    <property type="interactions" value="452"/>
</dbReference>
<dbReference type="IntAct" id="Q8NI22">
    <property type="interactions" value="26"/>
</dbReference>
<dbReference type="MINT" id="Q8NI22"/>
<dbReference type="STRING" id="9606.ENSP00000386651"/>
<dbReference type="DrugBank" id="DB00025">
    <property type="generic name" value="Antihemophilic factor, human recombinant"/>
</dbReference>
<dbReference type="DrugBank" id="DB13998">
    <property type="generic name" value="Lonoctocog alfa"/>
</dbReference>
<dbReference type="DrugBank" id="DB13999">
    <property type="generic name" value="Moroctocog alfa"/>
</dbReference>
<dbReference type="TCDB" id="9.B.417.1.1">
    <property type="family name" value="the mcfd2/lman1 complex receptor (mlm-cr) family"/>
</dbReference>
<dbReference type="GlyCosmos" id="Q8NI22">
    <property type="glycosylation" value="1 site, 1 glycan"/>
</dbReference>
<dbReference type="GlyGen" id="Q8NI22">
    <property type="glycosylation" value="5 sites, 3 O-linked glycans (5 sites)"/>
</dbReference>
<dbReference type="iPTMnet" id="Q8NI22"/>
<dbReference type="PhosphoSitePlus" id="Q8NI22"/>
<dbReference type="BioMuta" id="MCFD2"/>
<dbReference type="DMDM" id="49036425"/>
<dbReference type="jPOST" id="Q8NI22"/>
<dbReference type="MassIVE" id="Q8NI22"/>
<dbReference type="PaxDb" id="9606-ENSP00000386651"/>
<dbReference type="PeptideAtlas" id="Q8NI22"/>
<dbReference type="ProteomicsDB" id="73813">
    <molecule id="Q8NI22-1"/>
</dbReference>
<dbReference type="ProteomicsDB" id="73814">
    <molecule id="Q8NI22-2"/>
</dbReference>
<dbReference type="ProteomicsDB" id="73815">
    <molecule id="Q8NI22-3"/>
</dbReference>
<dbReference type="Pumba" id="Q8NI22"/>
<dbReference type="TopDownProteomics" id="Q8NI22-1">
    <molecule id="Q8NI22-1"/>
</dbReference>
<dbReference type="Antibodypedia" id="29996">
    <property type="antibodies" value="177 antibodies from 29 providers"/>
</dbReference>
<dbReference type="DNASU" id="90411"/>
<dbReference type="Ensembl" id="ENST00000319466.9">
    <molecule id="Q8NI22-1"/>
    <property type="protein sequence ID" value="ENSP00000317271.4"/>
    <property type="gene ID" value="ENSG00000180398.13"/>
</dbReference>
<dbReference type="Ensembl" id="ENST00000409105.5">
    <molecule id="Q8NI22-1"/>
    <property type="protein sequence ID" value="ENSP00000386651.1"/>
    <property type="gene ID" value="ENSG00000180398.13"/>
</dbReference>
<dbReference type="Ensembl" id="ENST00000409147.1">
    <molecule id="Q8NI22-2"/>
    <property type="protein sequence ID" value="ENSP00000387082.1"/>
    <property type="gene ID" value="ENSG00000180398.13"/>
</dbReference>
<dbReference type="Ensembl" id="ENST00000409207.5">
    <molecule id="Q8NI22-1"/>
    <property type="protein sequence ID" value="ENSP00000386386.1"/>
    <property type="gene ID" value="ENSG00000180398.13"/>
</dbReference>
<dbReference type="Ensembl" id="ENST00000409218.5">
    <molecule id="Q8NI22-1"/>
    <property type="protein sequence ID" value="ENSP00000386261.1"/>
    <property type="gene ID" value="ENSG00000180398.13"/>
</dbReference>
<dbReference type="Ensembl" id="ENST00000409800.5">
    <molecule id="Q8NI22-2"/>
    <property type="protein sequence ID" value="ENSP00000387202.1"/>
    <property type="gene ID" value="ENSG00000180398.13"/>
</dbReference>
<dbReference type="Ensembl" id="ENST00000409913.5">
    <molecule id="Q8NI22-2"/>
    <property type="protein sequence ID" value="ENSP00000386941.1"/>
    <property type="gene ID" value="ENSG00000180398.13"/>
</dbReference>
<dbReference type="Ensembl" id="ENST00000409973.5">
    <molecule id="Q8NI22-1"/>
    <property type="protein sequence ID" value="ENSP00000386279.1"/>
    <property type="gene ID" value="ENSG00000180398.13"/>
</dbReference>
<dbReference type="Ensembl" id="ENST00000412438.5">
    <molecule id="Q8NI22-1"/>
    <property type="protein sequence ID" value="ENSP00000402717.1"/>
    <property type="gene ID" value="ENSG00000180398.13"/>
</dbReference>
<dbReference type="Ensembl" id="ENST00000444761.6">
    <molecule id="Q8NI22-3"/>
    <property type="protein sequence ID" value="ENSP00000394647.2"/>
    <property type="gene ID" value="ENSG00000180398.13"/>
</dbReference>
<dbReference type="GeneID" id="90411"/>
<dbReference type="KEGG" id="hsa:90411"/>
<dbReference type="MANE-Select" id="ENST00000319466.9">
    <property type="protein sequence ID" value="ENSP00000317271.4"/>
    <property type="RefSeq nucleotide sequence ID" value="NM_139279.6"/>
    <property type="RefSeq protein sequence ID" value="NP_644808.1"/>
</dbReference>
<dbReference type="UCSC" id="uc002rvk.4">
    <molecule id="Q8NI22-1"/>
    <property type="organism name" value="human"/>
</dbReference>
<dbReference type="AGR" id="HGNC:18451"/>
<dbReference type="CTD" id="90411"/>
<dbReference type="DisGeNET" id="90411"/>
<dbReference type="GeneCards" id="MCFD2"/>
<dbReference type="HGNC" id="HGNC:18451">
    <property type="gene designation" value="MCFD2"/>
</dbReference>
<dbReference type="HPA" id="ENSG00000180398">
    <property type="expression patterns" value="Low tissue specificity"/>
</dbReference>
<dbReference type="MalaCards" id="MCFD2"/>
<dbReference type="MIM" id="607788">
    <property type="type" value="gene"/>
</dbReference>
<dbReference type="MIM" id="613625">
    <property type="type" value="phenotype"/>
</dbReference>
<dbReference type="neXtProt" id="NX_Q8NI22"/>
<dbReference type="OpenTargets" id="ENSG00000180398"/>
<dbReference type="Orphanet" id="35909">
    <property type="disease" value="Combined deficiency of factor V and factor VIII"/>
</dbReference>
<dbReference type="PharmGKB" id="PA134925788"/>
<dbReference type="VEuPathDB" id="HostDB:ENSG00000180398"/>
<dbReference type="eggNOG" id="KOG4065">
    <property type="taxonomic scope" value="Eukaryota"/>
</dbReference>
<dbReference type="GeneTree" id="ENSGT00940000154141"/>
<dbReference type="HOGENOM" id="CLU_100744_2_0_1"/>
<dbReference type="InParanoid" id="Q8NI22"/>
<dbReference type="OMA" id="GRLDKNM"/>
<dbReference type="OrthoDB" id="289247at2759"/>
<dbReference type="PAN-GO" id="Q8NI22">
    <property type="GO annotations" value="0 GO annotations based on evolutionary models"/>
</dbReference>
<dbReference type="PhylomeDB" id="Q8NI22"/>
<dbReference type="TreeFam" id="TF315801"/>
<dbReference type="PathwayCommons" id="Q8NI22"/>
<dbReference type="Reactome" id="R-HSA-204005">
    <property type="pathway name" value="COPII-mediated vesicle transport"/>
</dbReference>
<dbReference type="Reactome" id="R-HSA-5694530">
    <property type="pathway name" value="Cargo concentration in the ER"/>
</dbReference>
<dbReference type="Reactome" id="R-HSA-948021">
    <property type="pathway name" value="Transport to the Golgi and subsequent modification"/>
</dbReference>
<dbReference type="SignaLink" id="Q8NI22"/>
<dbReference type="BioGRID-ORCS" id="90411">
    <property type="hits" value="8 hits in 1149 CRISPR screens"/>
</dbReference>
<dbReference type="ChiTaRS" id="MCFD2">
    <property type="organism name" value="human"/>
</dbReference>
<dbReference type="EvolutionaryTrace" id="Q8NI22"/>
<dbReference type="GeneWiki" id="MCFD2"/>
<dbReference type="GenomeRNAi" id="90411"/>
<dbReference type="Pharos" id="Q8NI22">
    <property type="development level" value="Tbio"/>
</dbReference>
<dbReference type="PRO" id="PR:Q8NI22"/>
<dbReference type="Proteomes" id="UP000005640">
    <property type="component" value="Chromosome 2"/>
</dbReference>
<dbReference type="RNAct" id="Q8NI22">
    <property type="molecule type" value="protein"/>
</dbReference>
<dbReference type="Bgee" id="ENSG00000180398">
    <property type="expression patterns" value="Expressed in parotid gland and 218 other cell types or tissues"/>
</dbReference>
<dbReference type="ExpressionAtlas" id="Q8NI22">
    <property type="expression patterns" value="baseline and differential"/>
</dbReference>
<dbReference type="GO" id="GO:0005789">
    <property type="term" value="C:endoplasmic reticulum membrane"/>
    <property type="evidence" value="ECO:0000304"/>
    <property type="project" value="Reactome"/>
</dbReference>
<dbReference type="GO" id="GO:0033116">
    <property type="term" value="C:endoplasmic reticulum-Golgi intermediate compartment membrane"/>
    <property type="evidence" value="ECO:0000304"/>
    <property type="project" value="Reactome"/>
</dbReference>
<dbReference type="GO" id="GO:0012507">
    <property type="term" value="C:ER to Golgi transport vesicle membrane"/>
    <property type="evidence" value="ECO:0000304"/>
    <property type="project" value="Reactome"/>
</dbReference>
<dbReference type="GO" id="GO:0005794">
    <property type="term" value="C:Golgi apparatus"/>
    <property type="evidence" value="ECO:0007669"/>
    <property type="project" value="UniProtKB-SubCell"/>
</dbReference>
<dbReference type="GO" id="GO:0005509">
    <property type="term" value="F:calcium ion binding"/>
    <property type="evidence" value="ECO:0007669"/>
    <property type="project" value="InterPro"/>
</dbReference>
<dbReference type="GO" id="GO:0015031">
    <property type="term" value="P:protein transport"/>
    <property type="evidence" value="ECO:0007669"/>
    <property type="project" value="UniProtKB-KW"/>
</dbReference>
<dbReference type="GO" id="GO:0016192">
    <property type="term" value="P:vesicle-mediated transport"/>
    <property type="evidence" value="ECO:0007669"/>
    <property type="project" value="UniProtKB-KW"/>
</dbReference>
<dbReference type="DisProt" id="DP01637"/>
<dbReference type="FunFam" id="1.10.238.10:FF:000117">
    <property type="entry name" value="multiple coagulation factor deficiency protein 2"/>
    <property type="match status" value="1"/>
</dbReference>
<dbReference type="Gene3D" id="1.10.238.10">
    <property type="entry name" value="EF-hand"/>
    <property type="match status" value="1"/>
</dbReference>
<dbReference type="InterPro" id="IPR011992">
    <property type="entry name" value="EF-hand-dom_pair"/>
</dbReference>
<dbReference type="InterPro" id="IPR018247">
    <property type="entry name" value="EF_Hand_1_Ca_BS"/>
</dbReference>
<dbReference type="InterPro" id="IPR002048">
    <property type="entry name" value="EF_hand_dom"/>
</dbReference>
<dbReference type="InterPro" id="IPR052110">
    <property type="entry name" value="ER-Golgi_Adhesion_Reg"/>
</dbReference>
<dbReference type="PANTHER" id="PTHR23104:SF14">
    <property type="entry name" value="MULTIPLE COAGULATION FACTOR DEFICIENCY PROTEIN 2"/>
    <property type="match status" value="1"/>
</dbReference>
<dbReference type="PANTHER" id="PTHR23104">
    <property type="entry name" value="MULTIPLE COAGULATION FACTOR DEFICIENCY PROTEIN 2 NEURAL STEM CELL DERIVED NEURONAL SURVIVAL PROTEIN"/>
    <property type="match status" value="1"/>
</dbReference>
<dbReference type="Pfam" id="PF13499">
    <property type="entry name" value="EF-hand_7"/>
    <property type="match status" value="1"/>
</dbReference>
<dbReference type="SUPFAM" id="SSF47473">
    <property type="entry name" value="EF-hand"/>
    <property type="match status" value="1"/>
</dbReference>
<dbReference type="PROSITE" id="PS00018">
    <property type="entry name" value="EF_HAND_1"/>
    <property type="match status" value="2"/>
</dbReference>
<dbReference type="PROSITE" id="PS50222">
    <property type="entry name" value="EF_HAND_2"/>
    <property type="match status" value="2"/>
</dbReference>
<organism>
    <name type="scientific">Homo sapiens</name>
    <name type="common">Human</name>
    <dbReference type="NCBI Taxonomy" id="9606"/>
    <lineage>
        <taxon>Eukaryota</taxon>
        <taxon>Metazoa</taxon>
        <taxon>Chordata</taxon>
        <taxon>Craniata</taxon>
        <taxon>Vertebrata</taxon>
        <taxon>Euteleostomi</taxon>
        <taxon>Mammalia</taxon>
        <taxon>Eutheria</taxon>
        <taxon>Euarchontoglires</taxon>
        <taxon>Primates</taxon>
        <taxon>Haplorrhini</taxon>
        <taxon>Catarrhini</taxon>
        <taxon>Hominidae</taxon>
        <taxon>Homo</taxon>
    </lineage>
</organism>
<feature type="signal peptide" evidence="2">
    <location>
        <begin position="1"/>
        <end position="26"/>
    </location>
</feature>
<feature type="chain" id="PRO_0000004159" description="Multiple coagulation factor deficiency protein 2">
    <location>
        <begin position="27"/>
        <end position="146"/>
    </location>
</feature>
<feature type="domain" description="EF-hand 1" evidence="3">
    <location>
        <begin position="68"/>
        <end position="103"/>
    </location>
</feature>
<feature type="domain" description="EF-hand 2" evidence="3">
    <location>
        <begin position="116"/>
        <end position="146"/>
    </location>
</feature>
<feature type="binding site" evidence="3">
    <location>
        <position position="81"/>
    </location>
    <ligand>
        <name>Ca(2+)</name>
        <dbReference type="ChEBI" id="CHEBI:29108"/>
        <label>1</label>
    </ligand>
</feature>
<feature type="binding site" evidence="3">
    <location>
        <position position="83"/>
    </location>
    <ligand>
        <name>Ca(2+)</name>
        <dbReference type="ChEBI" id="CHEBI:29108"/>
        <label>1</label>
    </ligand>
</feature>
<feature type="binding site" evidence="3">
    <location>
        <position position="85"/>
    </location>
    <ligand>
        <name>Ca(2+)</name>
        <dbReference type="ChEBI" id="CHEBI:29108"/>
        <label>1</label>
    </ligand>
</feature>
<feature type="binding site" evidence="3">
    <location>
        <position position="92"/>
    </location>
    <ligand>
        <name>Ca(2+)</name>
        <dbReference type="ChEBI" id="CHEBI:29108"/>
        <label>1</label>
    </ligand>
</feature>
<feature type="binding site" evidence="3">
    <location>
        <position position="129"/>
    </location>
    <ligand>
        <name>Ca(2+)</name>
        <dbReference type="ChEBI" id="CHEBI:29108"/>
        <label>2</label>
    </ligand>
</feature>
<feature type="binding site" evidence="3">
    <location>
        <position position="131"/>
    </location>
    <ligand>
        <name>Ca(2+)</name>
        <dbReference type="ChEBI" id="CHEBI:29108"/>
        <label>2</label>
    </ligand>
</feature>
<feature type="binding site" evidence="3">
    <location>
        <position position="133"/>
    </location>
    <ligand>
        <name>Ca(2+)</name>
        <dbReference type="ChEBI" id="CHEBI:29108"/>
        <label>2</label>
    </ligand>
</feature>
<feature type="binding site" evidence="3">
    <location>
        <position position="135"/>
    </location>
    <ligand>
        <name>Ca(2+)</name>
        <dbReference type="ChEBI" id="CHEBI:29108"/>
        <label>2</label>
    </ligand>
</feature>
<feature type="binding site" evidence="3">
    <location>
        <position position="140"/>
    </location>
    <ligand>
        <name>Ca(2+)</name>
        <dbReference type="ChEBI" id="CHEBI:29108"/>
        <label>2</label>
    </ligand>
</feature>
<feature type="modified residue" description="Phosphoserine" evidence="1">
    <location>
        <position position="106"/>
    </location>
</feature>
<feature type="splice variant" id="VSP_043815" description="In isoform 2." evidence="10 11">
    <location>
        <begin position="1"/>
        <end position="52"/>
    </location>
</feature>
<feature type="splice variant" id="VSP_043814" description="In isoform 3." evidence="12">
    <original>MTMRSLLRTPFLCGLLWAFCAPGARAEEPAASFSQPGSMGLDKNTVHDQE</original>
    <variation>MLSVCSCRTSSGMRSQWPSARQRSSSLSTFR</variation>
    <location>
        <begin position="1"/>
        <end position="50"/>
    </location>
</feature>
<feature type="sequence variant" id="VAR_072245" description="In F5F8D2; dbSNP:rs78289603." evidence="9">
    <original>D</original>
    <variation>H</variation>
    <location>
        <position position="81"/>
    </location>
</feature>
<feature type="sequence variant" id="VAR_019076" description="In F5F8D2; interferes with protein folding; dbSNP:rs137852913." evidence="4 5">
    <original>D</original>
    <variation>E</variation>
    <location>
        <position position="129"/>
    </location>
</feature>
<feature type="sequence variant" id="VAR_072246" description="In F5F8D2; dbSNP:rs748641905." evidence="6">
    <original>Y</original>
    <variation>N</variation>
    <location>
        <position position="135"/>
    </location>
</feature>
<feature type="sequence variant" id="VAR_019077" description="In F5F8D2; interferes with protein folding; dbSNP:rs137852914." evidence="4 5">
    <original>I</original>
    <variation>T</variation>
    <location>
        <position position="136"/>
    </location>
</feature>
<feature type="helix" evidence="15">
    <location>
        <begin position="43"/>
        <end position="47"/>
    </location>
</feature>
<feature type="helix" evidence="15">
    <location>
        <begin position="49"/>
        <end position="56"/>
    </location>
</feature>
<feature type="turn" evidence="16">
    <location>
        <begin position="57"/>
        <end position="59"/>
    </location>
</feature>
<feature type="helix" evidence="14">
    <location>
        <begin position="70"/>
        <end position="78"/>
    </location>
</feature>
<feature type="strand" evidence="14">
    <location>
        <begin position="85"/>
        <end position="89"/>
    </location>
</feature>
<feature type="helix" evidence="14">
    <location>
        <begin position="90"/>
        <end position="97"/>
    </location>
</feature>
<feature type="strand" evidence="13">
    <location>
        <begin position="106"/>
        <end position="108"/>
    </location>
</feature>
<feature type="helix" evidence="14">
    <location>
        <begin position="114"/>
        <end position="128"/>
    </location>
</feature>
<feature type="strand" evidence="14">
    <location>
        <begin position="133"/>
        <end position="137"/>
    </location>
</feature>
<feature type="helix" evidence="14">
    <location>
        <begin position="138"/>
        <end position="142"/>
    </location>
</feature>
<sequence>MTMRSLLRTPFLCGLLWAFCAPGARAEEPAASFSQPGSMGLDKNTVHDQEHIMEHLEGVINKPEAEMSPQELQLHYFKMHDYDGNNLLDGLELSTAITHVHKEEGSEQAPLMSEDELINIIDGVLRDDDKNNDGYIDYAEFAKSLQ</sequence>